<accession>C3L1A9</accession>
<gene>
    <name evidence="1" type="primary">atpD</name>
    <name type="ordered locus">CLJ_B2853</name>
</gene>
<sequence length="216" mass="25031">MKLNVNPTRMELTKLKKRLTTATRGHKLLKDKQDELMRRFIGMIKKNNELRKDVEKELEGSFKDFLMASAVMSPEFLEEAVAYPKESISVDVKKQNIMSVNVPVFDFKRKLEGDKGSIFPYGFANTSAELDGAIEKLYGILPKLLELAKVEKACQLMADEIEKTRRRVNALEYMTIPQLEETIRFIQMKLDENERSTVTRLMKIKSMMEEKQSNMV</sequence>
<comment type="function">
    <text evidence="1">Produces ATP from ADP in the presence of a proton gradient across the membrane.</text>
</comment>
<comment type="similarity">
    <text evidence="1">Belongs to the V-ATPase D subunit family.</text>
</comment>
<reference key="1">
    <citation type="submission" date="2008-05" db="EMBL/GenBank/DDBJ databases">
        <title>Genome sequence of Clostridium botulinum Ba4 strain 657.</title>
        <authorList>
            <person name="Shrivastava S."/>
            <person name="Brown J.L."/>
            <person name="Bruce D."/>
            <person name="Detter C."/>
            <person name="Munk C."/>
            <person name="Smith L.A."/>
            <person name="Smith T.J."/>
            <person name="Sutton G."/>
            <person name="Brettin T.S."/>
        </authorList>
    </citation>
    <scope>NUCLEOTIDE SEQUENCE [LARGE SCALE GENOMIC DNA]</scope>
    <source>
        <strain>657 / Type Ba4</strain>
    </source>
</reference>
<organism>
    <name type="scientific">Clostridium botulinum (strain 657 / Type Ba4)</name>
    <dbReference type="NCBI Taxonomy" id="515621"/>
    <lineage>
        <taxon>Bacteria</taxon>
        <taxon>Bacillati</taxon>
        <taxon>Bacillota</taxon>
        <taxon>Clostridia</taxon>
        <taxon>Eubacteriales</taxon>
        <taxon>Clostridiaceae</taxon>
        <taxon>Clostridium</taxon>
    </lineage>
</organism>
<protein>
    <recommendedName>
        <fullName evidence="1">V-type ATP synthase subunit D</fullName>
    </recommendedName>
    <alternativeName>
        <fullName evidence="1">V-ATPase subunit D</fullName>
    </alternativeName>
</protein>
<evidence type="ECO:0000255" key="1">
    <source>
        <dbReference type="HAMAP-Rule" id="MF_00271"/>
    </source>
</evidence>
<dbReference type="EMBL" id="CP001083">
    <property type="protein sequence ID" value="ACQ54743.1"/>
    <property type="molecule type" value="Genomic_DNA"/>
</dbReference>
<dbReference type="RefSeq" id="WP_003401356.1">
    <property type="nucleotide sequence ID" value="NC_012658.1"/>
</dbReference>
<dbReference type="SMR" id="C3L1A9"/>
<dbReference type="KEGG" id="cbi:CLJ_B2853"/>
<dbReference type="HOGENOM" id="CLU_069688_2_1_9"/>
<dbReference type="Proteomes" id="UP000002333">
    <property type="component" value="Chromosome"/>
</dbReference>
<dbReference type="GO" id="GO:0005524">
    <property type="term" value="F:ATP binding"/>
    <property type="evidence" value="ECO:0007669"/>
    <property type="project" value="UniProtKB-UniRule"/>
</dbReference>
<dbReference type="GO" id="GO:0046933">
    <property type="term" value="F:proton-transporting ATP synthase activity, rotational mechanism"/>
    <property type="evidence" value="ECO:0007669"/>
    <property type="project" value="UniProtKB-UniRule"/>
</dbReference>
<dbReference type="GO" id="GO:0046961">
    <property type="term" value="F:proton-transporting ATPase activity, rotational mechanism"/>
    <property type="evidence" value="ECO:0007669"/>
    <property type="project" value="InterPro"/>
</dbReference>
<dbReference type="GO" id="GO:0042777">
    <property type="term" value="P:proton motive force-driven plasma membrane ATP synthesis"/>
    <property type="evidence" value="ECO:0007669"/>
    <property type="project" value="UniProtKB-UniRule"/>
</dbReference>
<dbReference type="FunFam" id="1.10.287.3240:FF:000007">
    <property type="entry name" value="V-type ATP synthase subunit D"/>
    <property type="match status" value="1"/>
</dbReference>
<dbReference type="Gene3D" id="1.10.287.3240">
    <property type="match status" value="1"/>
</dbReference>
<dbReference type="HAMAP" id="MF_00271">
    <property type="entry name" value="ATP_synth_D_arch"/>
    <property type="match status" value="1"/>
</dbReference>
<dbReference type="InterPro" id="IPR002699">
    <property type="entry name" value="V_ATPase_D"/>
</dbReference>
<dbReference type="NCBIfam" id="NF001543">
    <property type="entry name" value="PRK00373.1-2"/>
    <property type="match status" value="1"/>
</dbReference>
<dbReference type="NCBIfam" id="TIGR00309">
    <property type="entry name" value="V_ATPase_subD"/>
    <property type="match status" value="1"/>
</dbReference>
<dbReference type="PANTHER" id="PTHR11671">
    <property type="entry name" value="V-TYPE ATP SYNTHASE SUBUNIT D"/>
    <property type="match status" value="1"/>
</dbReference>
<dbReference type="Pfam" id="PF01813">
    <property type="entry name" value="ATP-synt_D"/>
    <property type="match status" value="1"/>
</dbReference>
<keyword id="KW-0066">ATP synthesis</keyword>
<keyword id="KW-0375">Hydrogen ion transport</keyword>
<keyword id="KW-0406">Ion transport</keyword>
<keyword id="KW-0813">Transport</keyword>
<name>VATD_CLOB6</name>
<proteinExistence type="inferred from homology"/>
<feature type="chain" id="PRO_1000209789" description="V-type ATP synthase subunit D">
    <location>
        <begin position="1"/>
        <end position="216"/>
    </location>
</feature>